<keyword id="KW-0878">Amphibian defense peptide</keyword>
<keyword id="KW-0044">Antibiotic</keyword>
<keyword id="KW-0929">Antimicrobial</keyword>
<keyword id="KW-0049">Antioxidant</keyword>
<keyword id="KW-0165">Cleavage on pair of basic residues</keyword>
<keyword id="KW-0204">Cytolysis</keyword>
<keyword id="KW-0903">Direct protein sequencing</keyword>
<keyword id="KW-1015">Disulfide bond</keyword>
<keyword id="KW-0295">Fungicide</keyword>
<keyword id="KW-0354">Hemolysis</keyword>
<keyword id="KW-0964">Secreted</keyword>
<keyword id="KW-0732">Signal</keyword>
<feature type="signal peptide" evidence="2">
    <location>
        <begin position="1"/>
        <end position="22"/>
    </location>
</feature>
<feature type="propeptide" id="PRO_0000415404" evidence="2 4">
    <location>
        <begin position="23"/>
        <end position="40"/>
    </location>
</feature>
<feature type="peptide" id="PRO_0000415405" description="Jindongenin-1a" evidence="3">
    <location>
        <begin position="43"/>
        <end position="66"/>
    </location>
</feature>
<feature type="disulfide bond" evidence="1">
    <location>
        <begin position="60"/>
        <end position="66"/>
    </location>
</feature>
<reference evidence="5 7" key="1">
    <citation type="journal article" date="2012" name="Biochimie">
        <title>Two novel families of antimicrobial peptides from skin secretions of the Chinese torrent frog, Amolops jingdongensis.</title>
        <authorList>
            <person name="Chen Z."/>
            <person name="Yang X."/>
            <person name="Liu Z."/>
            <person name="Zeng L."/>
            <person name="Lee W."/>
            <person name="Zhang Y."/>
        </authorList>
    </citation>
    <scope>NUCLEOTIDE SEQUENCE [MRNA]</scope>
    <scope>PROTEIN SEQUENCE OF 43-66</scope>
    <scope>FUNCTION</scope>
    <scope>SUBCELLULAR LOCATION</scope>
    <scope>SYNTHESIS</scope>
    <scope>MASS SPECTROMETRY</scope>
    <source>
        <tissue evidence="7">Skin</tissue>
        <tissue evidence="3">Skin secretion</tissue>
    </source>
</reference>
<sequence length="66" mass="7392">MFTLKKPLLLLFFLGTVSLSLCEQERAADDDEGEVIEEEVKRDSMGAVKLAKLLIDKMKCEVTKAC</sequence>
<evidence type="ECO:0000250" key="1">
    <source>
        <dbReference type="UniProtKB" id="A7WNV6"/>
    </source>
</evidence>
<evidence type="ECO:0000255" key="2"/>
<evidence type="ECO:0000269" key="3">
    <source>
    </source>
</evidence>
<evidence type="ECO:0000303" key="4">
    <source>
    </source>
</evidence>
<evidence type="ECO:0000305" key="5"/>
<evidence type="ECO:0000305" key="6">
    <source>
    </source>
</evidence>
<evidence type="ECO:0000312" key="7">
    <source>
        <dbReference type="EMBL" id="AEN14487.1"/>
    </source>
</evidence>
<proteinExistence type="evidence at protein level"/>
<comment type="function">
    <text evidence="3">Displays broad-spectrum antibacterial activity against a range of Gram-positive and Gram-negative bacteria. Also displays antifungal activity against C.albicans ATCC 2002. Has low hemolytic activity, low cytotoxicity and low antioxidant activity.</text>
</comment>
<comment type="subcellular location">
    <subcellularLocation>
        <location evidence="3">Secreted</location>
    </subcellularLocation>
</comment>
<comment type="tissue specificity">
    <text evidence="6">Expressed by the skin glands.</text>
</comment>
<comment type="mass spectrometry" mass="2594.8" method="FAB" evidence="3"/>
<comment type="similarity">
    <text evidence="2">Belongs to the frog skin active peptide (FSAP) family. Brevinin subfamily.</text>
</comment>
<accession>G3ETQ2</accession>
<name>JNG1A_AMOJI</name>
<protein>
    <recommendedName>
        <fullName evidence="4">Jindongenin-1a</fullName>
    </recommendedName>
    <alternativeName>
        <fullName evidence="7">Jindongenin-1</fullName>
    </alternativeName>
</protein>
<organism>
    <name type="scientific">Amolops jingdongensis</name>
    <name type="common">Chinese torrent frog</name>
    <dbReference type="NCBI Taxonomy" id="1077530"/>
    <lineage>
        <taxon>Eukaryota</taxon>
        <taxon>Metazoa</taxon>
        <taxon>Chordata</taxon>
        <taxon>Craniata</taxon>
        <taxon>Vertebrata</taxon>
        <taxon>Euteleostomi</taxon>
        <taxon>Amphibia</taxon>
        <taxon>Batrachia</taxon>
        <taxon>Anura</taxon>
        <taxon>Neobatrachia</taxon>
        <taxon>Ranoidea</taxon>
        <taxon>Ranidae</taxon>
        <taxon>Amolops</taxon>
    </lineage>
</organism>
<dbReference type="EMBL" id="JF412290">
    <property type="protein sequence ID" value="AEN14487.1"/>
    <property type="molecule type" value="mRNA"/>
</dbReference>
<dbReference type="GO" id="GO:0005576">
    <property type="term" value="C:extracellular region"/>
    <property type="evidence" value="ECO:0000314"/>
    <property type="project" value="UniProtKB"/>
</dbReference>
<dbReference type="GO" id="GO:0016209">
    <property type="term" value="F:antioxidant activity"/>
    <property type="evidence" value="ECO:0007669"/>
    <property type="project" value="UniProtKB-KW"/>
</dbReference>
<dbReference type="GO" id="GO:0050832">
    <property type="term" value="P:defense response to fungus"/>
    <property type="evidence" value="ECO:0000314"/>
    <property type="project" value="UniProtKB"/>
</dbReference>
<dbReference type="GO" id="GO:0050829">
    <property type="term" value="P:defense response to Gram-negative bacterium"/>
    <property type="evidence" value="ECO:0000314"/>
    <property type="project" value="UniProtKB"/>
</dbReference>
<dbReference type="GO" id="GO:0050830">
    <property type="term" value="P:defense response to Gram-positive bacterium"/>
    <property type="evidence" value="ECO:0000314"/>
    <property type="project" value="UniProtKB"/>
</dbReference>
<dbReference type="GO" id="GO:0044179">
    <property type="term" value="P:hemolysis in another organism"/>
    <property type="evidence" value="ECO:0000314"/>
    <property type="project" value="UniProtKB"/>
</dbReference>
<dbReference type="GO" id="GO:0031640">
    <property type="term" value="P:killing of cells of another organism"/>
    <property type="evidence" value="ECO:0000314"/>
    <property type="project" value="UniProtKB"/>
</dbReference>
<dbReference type="InterPro" id="IPR004275">
    <property type="entry name" value="Frog_antimicrobial_propeptide"/>
</dbReference>
<dbReference type="Pfam" id="PF03032">
    <property type="entry name" value="FSAP_sig_propep"/>
    <property type="match status" value="1"/>
</dbReference>